<gene>
    <name evidence="1" type="primary">atpH</name>
    <name evidence="1" type="synonym">atpD</name>
    <name type="ordered locus">P9211_15711</name>
</gene>
<sequence length="182" mass="19996">MPLLNTITTPYAEAFLQVAESKKEVEKIIAQAKSILQLWDESSELREAMGSPVLEVESKKAALEKIFSGKVTPSFLNFMKLLAERQRIGFLNSVLERLLELYRAQRNIALATVTSATPLNEDQQAALLKNVQSVAGTNNLELNLKVDPDLIGGFVVRVGSKVIDASLSGQVRRMGLELAKVT</sequence>
<accession>A9BCE0</accession>
<name>ATPD_PROM4</name>
<feature type="chain" id="PRO_0000371061" description="ATP synthase subunit delta">
    <location>
        <begin position="1"/>
        <end position="182"/>
    </location>
</feature>
<keyword id="KW-0066">ATP synthesis</keyword>
<keyword id="KW-0139">CF(1)</keyword>
<keyword id="KW-0375">Hydrogen ion transport</keyword>
<keyword id="KW-0406">Ion transport</keyword>
<keyword id="KW-0472">Membrane</keyword>
<keyword id="KW-1185">Reference proteome</keyword>
<keyword id="KW-0793">Thylakoid</keyword>
<keyword id="KW-0813">Transport</keyword>
<proteinExistence type="inferred from homology"/>
<reference key="1">
    <citation type="journal article" date="2007" name="PLoS Genet.">
        <title>Patterns and implications of gene gain and loss in the evolution of Prochlorococcus.</title>
        <authorList>
            <person name="Kettler G.C."/>
            <person name="Martiny A.C."/>
            <person name="Huang K."/>
            <person name="Zucker J."/>
            <person name="Coleman M.L."/>
            <person name="Rodrigue S."/>
            <person name="Chen F."/>
            <person name="Lapidus A."/>
            <person name="Ferriera S."/>
            <person name="Johnson J."/>
            <person name="Steglich C."/>
            <person name="Church G.M."/>
            <person name="Richardson P."/>
            <person name="Chisholm S.W."/>
        </authorList>
    </citation>
    <scope>NUCLEOTIDE SEQUENCE [LARGE SCALE GENOMIC DNA]</scope>
    <source>
        <strain>MIT 9211</strain>
    </source>
</reference>
<evidence type="ECO:0000255" key="1">
    <source>
        <dbReference type="HAMAP-Rule" id="MF_01416"/>
    </source>
</evidence>
<organism>
    <name type="scientific">Prochlorococcus marinus (strain MIT 9211)</name>
    <dbReference type="NCBI Taxonomy" id="93059"/>
    <lineage>
        <taxon>Bacteria</taxon>
        <taxon>Bacillati</taxon>
        <taxon>Cyanobacteriota</taxon>
        <taxon>Cyanophyceae</taxon>
        <taxon>Synechococcales</taxon>
        <taxon>Prochlorococcaceae</taxon>
        <taxon>Prochlorococcus</taxon>
    </lineage>
</organism>
<comment type="function">
    <text evidence="1">F(1)F(0) ATP synthase produces ATP from ADP in the presence of a proton or sodium gradient. F-type ATPases consist of two structural domains, F(1) containing the extramembraneous catalytic core and F(0) containing the membrane proton channel, linked together by a central stalk and a peripheral stalk. During catalysis, ATP synthesis in the catalytic domain of F(1) is coupled via a rotary mechanism of the central stalk subunits to proton translocation.</text>
</comment>
<comment type="function">
    <text evidence="1">This protein is part of the stalk that links CF(0) to CF(1). It either transmits conformational changes from CF(0) to CF(1) or is implicated in proton conduction.</text>
</comment>
<comment type="subunit">
    <text evidence="1">F-type ATPases have 2 components, F(1) - the catalytic core - and F(0) - the membrane proton channel. F(1) has five subunits: alpha(3), beta(3), gamma(1), delta(1), epsilon(1). CF(0) has four main subunits: a(1), b(1), b'(1) and c(10-14). The alpha and beta chains form an alternating ring which encloses part of the gamma chain. F(1) is attached to F(0) by a central stalk formed by the gamma and epsilon chains, while a peripheral stalk is formed by the delta, b and b' chains.</text>
</comment>
<comment type="subcellular location">
    <subcellularLocation>
        <location evidence="1">Cellular thylakoid membrane</location>
        <topology evidence="1">Peripheral membrane protein</topology>
    </subcellularLocation>
</comment>
<comment type="similarity">
    <text evidence="1">Belongs to the ATPase delta chain family.</text>
</comment>
<dbReference type="EMBL" id="CP000878">
    <property type="protein sequence ID" value="ABX09502.1"/>
    <property type="molecule type" value="Genomic_DNA"/>
</dbReference>
<dbReference type="RefSeq" id="WP_012196123.1">
    <property type="nucleotide sequence ID" value="NC_009976.1"/>
</dbReference>
<dbReference type="SMR" id="A9BCE0"/>
<dbReference type="STRING" id="93059.P9211_15711"/>
<dbReference type="KEGG" id="pmj:P9211_15711"/>
<dbReference type="eggNOG" id="COG0712">
    <property type="taxonomic scope" value="Bacteria"/>
</dbReference>
<dbReference type="HOGENOM" id="CLU_085114_4_1_3"/>
<dbReference type="Proteomes" id="UP000000788">
    <property type="component" value="Chromosome"/>
</dbReference>
<dbReference type="GO" id="GO:0031676">
    <property type="term" value="C:plasma membrane-derived thylakoid membrane"/>
    <property type="evidence" value="ECO:0007669"/>
    <property type="project" value="UniProtKB-SubCell"/>
</dbReference>
<dbReference type="GO" id="GO:0045259">
    <property type="term" value="C:proton-transporting ATP synthase complex"/>
    <property type="evidence" value="ECO:0007669"/>
    <property type="project" value="UniProtKB-KW"/>
</dbReference>
<dbReference type="GO" id="GO:0046933">
    <property type="term" value="F:proton-transporting ATP synthase activity, rotational mechanism"/>
    <property type="evidence" value="ECO:0007669"/>
    <property type="project" value="UniProtKB-UniRule"/>
</dbReference>
<dbReference type="Gene3D" id="1.10.520.20">
    <property type="entry name" value="N-terminal domain of the delta subunit of the F1F0-ATP synthase"/>
    <property type="match status" value="1"/>
</dbReference>
<dbReference type="HAMAP" id="MF_01416">
    <property type="entry name" value="ATP_synth_delta_bact"/>
    <property type="match status" value="1"/>
</dbReference>
<dbReference type="InterPro" id="IPR026015">
    <property type="entry name" value="ATP_synth_OSCP/delta_N_sf"/>
</dbReference>
<dbReference type="InterPro" id="IPR020781">
    <property type="entry name" value="ATPase_OSCP/d_CS"/>
</dbReference>
<dbReference type="InterPro" id="IPR000711">
    <property type="entry name" value="ATPase_OSCP/dsu"/>
</dbReference>
<dbReference type="NCBIfam" id="TIGR01145">
    <property type="entry name" value="ATP_synt_delta"/>
    <property type="match status" value="1"/>
</dbReference>
<dbReference type="PANTHER" id="PTHR11910">
    <property type="entry name" value="ATP SYNTHASE DELTA CHAIN"/>
    <property type="match status" value="1"/>
</dbReference>
<dbReference type="Pfam" id="PF00213">
    <property type="entry name" value="OSCP"/>
    <property type="match status" value="1"/>
</dbReference>
<dbReference type="PRINTS" id="PR00125">
    <property type="entry name" value="ATPASEDELTA"/>
</dbReference>
<dbReference type="SUPFAM" id="SSF47928">
    <property type="entry name" value="N-terminal domain of the delta subunit of the F1F0-ATP synthase"/>
    <property type="match status" value="1"/>
</dbReference>
<dbReference type="PROSITE" id="PS00389">
    <property type="entry name" value="ATPASE_DELTA"/>
    <property type="match status" value="1"/>
</dbReference>
<protein>
    <recommendedName>
        <fullName evidence="1">ATP synthase subunit delta</fullName>
    </recommendedName>
    <alternativeName>
        <fullName evidence="1">ATP synthase F(1) sector subunit delta</fullName>
    </alternativeName>
    <alternativeName>
        <fullName evidence="1">F-type ATPase subunit delta</fullName>
        <shortName evidence="1">F-ATPase subunit delta</shortName>
    </alternativeName>
</protein>